<reference key="1">
    <citation type="journal article" date="2011" name="J. Bacteriol.">
        <title>Comparative genomics of 28 Salmonella enterica isolates: evidence for CRISPR-mediated adaptive sublineage evolution.</title>
        <authorList>
            <person name="Fricke W.F."/>
            <person name="Mammel M.K."/>
            <person name="McDermott P.F."/>
            <person name="Tartera C."/>
            <person name="White D.G."/>
            <person name="Leclerc J.E."/>
            <person name="Ravel J."/>
            <person name="Cebula T.A."/>
        </authorList>
    </citation>
    <scope>NUCLEOTIDE SEQUENCE [LARGE SCALE GENOMIC DNA]</scope>
    <source>
        <strain>CVM19633</strain>
    </source>
</reference>
<comment type="function">
    <text evidence="1">Has an important function as a repair enzyme for proteins that have been inactivated by oxidation. Catalyzes the reversible oxidation-reduction of methionine sulfoxide in proteins to methionine.</text>
</comment>
<comment type="catalytic activity">
    <reaction evidence="1">
        <text>L-methionyl-[protein] + [thioredoxin]-disulfide + H2O = L-methionyl-(S)-S-oxide-[protein] + [thioredoxin]-dithiol</text>
        <dbReference type="Rhea" id="RHEA:14217"/>
        <dbReference type="Rhea" id="RHEA-COMP:10698"/>
        <dbReference type="Rhea" id="RHEA-COMP:10700"/>
        <dbReference type="Rhea" id="RHEA-COMP:12313"/>
        <dbReference type="Rhea" id="RHEA-COMP:12315"/>
        <dbReference type="ChEBI" id="CHEBI:15377"/>
        <dbReference type="ChEBI" id="CHEBI:16044"/>
        <dbReference type="ChEBI" id="CHEBI:29950"/>
        <dbReference type="ChEBI" id="CHEBI:44120"/>
        <dbReference type="ChEBI" id="CHEBI:50058"/>
        <dbReference type="EC" id="1.8.4.11"/>
    </reaction>
</comment>
<comment type="catalytic activity">
    <reaction evidence="1">
        <text>[thioredoxin]-disulfide + L-methionine + H2O = L-methionine (S)-S-oxide + [thioredoxin]-dithiol</text>
        <dbReference type="Rhea" id="RHEA:19993"/>
        <dbReference type="Rhea" id="RHEA-COMP:10698"/>
        <dbReference type="Rhea" id="RHEA-COMP:10700"/>
        <dbReference type="ChEBI" id="CHEBI:15377"/>
        <dbReference type="ChEBI" id="CHEBI:29950"/>
        <dbReference type="ChEBI" id="CHEBI:50058"/>
        <dbReference type="ChEBI" id="CHEBI:57844"/>
        <dbReference type="ChEBI" id="CHEBI:58772"/>
        <dbReference type="EC" id="1.8.4.11"/>
    </reaction>
</comment>
<comment type="similarity">
    <text evidence="1">Belongs to the MsrA Met sulfoxide reductase family.</text>
</comment>
<protein>
    <recommendedName>
        <fullName evidence="1">Peptide methionine sulfoxide reductase MsrA</fullName>
        <shortName evidence="1">Protein-methionine-S-oxide reductase</shortName>
        <ecNumber evidence="1">1.8.4.11</ecNumber>
    </recommendedName>
    <alternativeName>
        <fullName evidence="1">Peptide-methionine (S)-S-oxide reductase</fullName>
        <shortName evidence="1">Peptide Met(O) reductase</shortName>
    </alternativeName>
</protein>
<gene>
    <name evidence="1" type="primary">msrA</name>
    <name type="ordered locus">SeSA_A4676</name>
</gene>
<sequence>MSLFDKKHLVTQADALPGRNTPMPIATLHAVNEHSMTNVPAGMEIAYFAMGCFWGVERLFWQLPGVYSTAAGYAGGYTPNPTYREVCSGQTGHAEAVRIVYDPAVIRYEQLLQIFWENHDPTQGMQQGNDHGTQYRSAIYPLTPEQSAAAHASRERFQSAMAAAGNHRPITTEITHATPFYYAEDEHQQYLHKNPYGYCGIGGIGVCLPPDA</sequence>
<proteinExistence type="inferred from homology"/>
<feature type="chain" id="PRO_1000145436" description="Peptide methionine sulfoxide reductase MsrA">
    <location>
        <begin position="1"/>
        <end position="212"/>
    </location>
</feature>
<feature type="active site" evidence="1">
    <location>
        <position position="52"/>
    </location>
</feature>
<keyword id="KW-0560">Oxidoreductase</keyword>
<evidence type="ECO:0000255" key="1">
    <source>
        <dbReference type="HAMAP-Rule" id="MF_01401"/>
    </source>
</evidence>
<organism>
    <name type="scientific">Salmonella schwarzengrund (strain CVM19633)</name>
    <dbReference type="NCBI Taxonomy" id="439843"/>
    <lineage>
        <taxon>Bacteria</taxon>
        <taxon>Pseudomonadati</taxon>
        <taxon>Pseudomonadota</taxon>
        <taxon>Gammaproteobacteria</taxon>
        <taxon>Enterobacterales</taxon>
        <taxon>Enterobacteriaceae</taxon>
        <taxon>Salmonella</taxon>
    </lineage>
</organism>
<name>MSRA_SALSV</name>
<dbReference type="EC" id="1.8.4.11" evidence="1"/>
<dbReference type="EMBL" id="CP001127">
    <property type="protein sequence ID" value="ACF91525.1"/>
    <property type="molecule type" value="Genomic_DNA"/>
</dbReference>
<dbReference type="RefSeq" id="WP_000051465.1">
    <property type="nucleotide sequence ID" value="NC_011094.1"/>
</dbReference>
<dbReference type="SMR" id="B4TT49"/>
<dbReference type="KEGG" id="sew:SeSA_A4676"/>
<dbReference type="HOGENOM" id="CLU_031040_10_3_6"/>
<dbReference type="Proteomes" id="UP000001865">
    <property type="component" value="Chromosome"/>
</dbReference>
<dbReference type="GO" id="GO:0005737">
    <property type="term" value="C:cytoplasm"/>
    <property type="evidence" value="ECO:0007669"/>
    <property type="project" value="TreeGrafter"/>
</dbReference>
<dbReference type="GO" id="GO:0036456">
    <property type="term" value="F:L-methionine-(S)-S-oxide reductase activity"/>
    <property type="evidence" value="ECO:0007669"/>
    <property type="project" value="TreeGrafter"/>
</dbReference>
<dbReference type="GO" id="GO:0008113">
    <property type="term" value="F:peptide-methionine (S)-S-oxide reductase activity"/>
    <property type="evidence" value="ECO:0007669"/>
    <property type="project" value="UniProtKB-UniRule"/>
</dbReference>
<dbReference type="GO" id="GO:0034599">
    <property type="term" value="P:cellular response to oxidative stress"/>
    <property type="evidence" value="ECO:0007669"/>
    <property type="project" value="TreeGrafter"/>
</dbReference>
<dbReference type="GO" id="GO:0036211">
    <property type="term" value="P:protein modification process"/>
    <property type="evidence" value="ECO:0007669"/>
    <property type="project" value="UniProtKB-UniRule"/>
</dbReference>
<dbReference type="FunFam" id="3.30.1060.10:FF:000001">
    <property type="entry name" value="Peptide methionine sulfoxide reductase MsrA"/>
    <property type="match status" value="1"/>
</dbReference>
<dbReference type="Gene3D" id="3.30.1060.10">
    <property type="entry name" value="Peptide methionine sulphoxide reductase MsrA"/>
    <property type="match status" value="1"/>
</dbReference>
<dbReference type="HAMAP" id="MF_01401">
    <property type="entry name" value="MsrA"/>
    <property type="match status" value="1"/>
</dbReference>
<dbReference type="InterPro" id="IPR002569">
    <property type="entry name" value="Met_Sox_Rdtase_MsrA_dom"/>
</dbReference>
<dbReference type="InterPro" id="IPR036509">
    <property type="entry name" value="Met_Sox_Rdtase_MsrA_sf"/>
</dbReference>
<dbReference type="InterPro" id="IPR050162">
    <property type="entry name" value="MsrA_MetSO_reductase"/>
</dbReference>
<dbReference type="NCBIfam" id="TIGR00401">
    <property type="entry name" value="msrA"/>
    <property type="match status" value="1"/>
</dbReference>
<dbReference type="PANTHER" id="PTHR42799">
    <property type="entry name" value="MITOCHONDRIAL PEPTIDE METHIONINE SULFOXIDE REDUCTASE"/>
    <property type="match status" value="1"/>
</dbReference>
<dbReference type="PANTHER" id="PTHR42799:SF2">
    <property type="entry name" value="MITOCHONDRIAL PEPTIDE METHIONINE SULFOXIDE REDUCTASE"/>
    <property type="match status" value="1"/>
</dbReference>
<dbReference type="Pfam" id="PF01625">
    <property type="entry name" value="PMSR"/>
    <property type="match status" value="1"/>
</dbReference>
<dbReference type="SUPFAM" id="SSF55068">
    <property type="entry name" value="Peptide methionine sulfoxide reductase"/>
    <property type="match status" value="1"/>
</dbReference>
<accession>B4TT49</accession>